<accession>Q3JMR5</accession>
<gene>
    <name evidence="1" type="primary">rplW</name>
    <name type="ordered locus">BURPS1710b_3774</name>
</gene>
<comment type="function">
    <text evidence="1">One of the early assembly proteins it binds 23S rRNA. One of the proteins that surrounds the polypeptide exit tunnel on the outside of the ribosome. Forms the main docking site for trigger factor binding to the ribosome.</text>
</comment>
<comment type="subunit">
    <text evidence="1">Part of the 50S ribosomal subunit. Contacts protein L29, and trigger factor when it is bound to the ribosome.</text>
</comment>
<comment type="similarity">
    <text evidence="1">Belongs to the universal ribosomal protein uL23 family.</text>
</comment>
<keyword id="KW-0687">Ribonucleoprotein</keyword>
<keyword id="KW-0689">Ribosomal protein</keyword>
<keyword id="KW-0694">RNA-binding</keyword>
<keyword id="KW-0699">rRNA-binding</keyword>
<feature type="chain" id="PRO_0000272723" description="Large ribosomal subunit protein uL23">
    <location>
        <begin position="1"/>
        <end position="104"/>
    </location>
</feature>
<reference key="1">
    <citation type="journal article" date="2010" name="Genome Biol. Evol.">
        <title>Continuing evolution of Burkholderia mallei through genome reduction and large-scale rearrangements.</title>
        <authorList>
            <person name="Losada L."/>
            <person name="Ronning C.M."/>
            <person name="DeShazer D."/>
            <person name="Woods D."/>
            <person name="Fedorova N."/>
            <person name="Kim H.S."/>
            <person name="Shabalina S.A."/>
            <person name="Pearson T.R."/>
            <person name="Brinkac L."/>
            <person name="Tan P."/>
            <person name="Nandi T."/>
            <person name="Crabtree J."/>
            <person name="Badger J."/>
            <person name="Beckstrom-Sternberg S."/>
            <person name="Saqib M."/>
            <person name="Schutzer S.E."/>
            <person name="Keim P."/>
            <person name="Nierman W.C."/>
        </authorList>
    </citation>
    <scope>NUCLEOTIDE SEQUENCE [LARGE SCALE GENOMIC DNA]</scope>
    <source>
        <strain>1710b</strain>
    </source>
</reference>
<organism>
    <name type="scientific">Burkholderia pseudomallei (strain 1710b)</name>
    <dbReference type="NCBI Taxonomy" id="320372"/>
    <lineage>
        <taxon>Bacteria</taxon>
        <taxon>Pseudomonadati</taxon>
        <taxon>Pseudomonadota</taxon>
        <taxon>Betaproteobacteria</taxon>
        <taxon>Burkholderiales</taxon>
        <taxon>Burkholderiaceae</taxon>
        <taxon>Burkholderia</taxon>
        <taxon>pseudomallei group</taxon>
    </lineage>
</organism>
<protein>
    <recommendedName>
        <fullName evidence="1">Large ribosomal subunit protein uL23</fullName>
    </recommendedName>
    <alternativeName>
        <fullName evidence="2">50S ribosomal protein L23</fullName>
    </alternativeName>
</protein>
<dbReference type="EMBL" id="CP000124">
    <property type="protein sequence ID" value="ABA51004.1"/>
    <property type="molecule type" value="Genomic_DNA"/>
</dbReference>
<dbReference type="RefSeq" id="WP_004199275.1">
    <property type="nucleotide sequence ID" value="NC_007434.1"/>
</dbReference>
<dbReference type="SMR" id="Q3JMR5"/>
<dbReference type="EnsemblBacteria" id="ABA51004">
    <property type="protein sequence ID" value="ABA51004"/>
    <property type="gene ID" value="BURPS1710b_3774"/>
</dbReference>
<dbReference type="GeneID" id="98107158"/>
<dbReference type="KEGG" id="bpm:BURPS1710b_3774"/>
<dbReference type="HOGENOM" id="CLU_037562_3_1_4"/>
<dbReference type="Proteomes" id="UP000002700">
    <property type="component" value="Chromosome I"/>
</dbReference>
<dbReference type="GO" id="GO:1990904">
    <property type="term" value="C:ribonucleoprotein complex"/>
    <property type="evidence" value="ECO:0007669"/>
    <property type="project" value="UniProtKB-KW"/>
</dbReference>
<dbReference type="GO" id="GO:0005840">
    <property type="term" value="C:ribosome"/>
    <property type="evidence" value="ECO:0007669"/>
    <property type="project" value="UniProtKB-KW"/>
</dbReference>
<dbReference type="GO" id="GO:0019843">
    <property type="term" value="F:rRNA binding"/>
    <property type="evidence" value="ECO:0007669"/>
    <property type="project" value="UniProtKB-UniRule"/>
</dbReference>
<dbReference type="GO" id="GO:0003735">
    <property type="term" value="F:structural constituent of ribosome"/>
    <property type="evidence" value="ECO:0007669"/>
    <property type="project" value="InterPro"/>
</dbReference>
<dbReference type="GO" id="GO:0006412">
    <property type="term" value="P:translation"/>
    <property type="evidence" value="ECO:0007669"/>
    <property type="project" value="UniProtKB-UniRule"/>
</dbReference>
<dbReference type="FunFam" id="3.30.70.330:FF:000001">
    <property type="entry name" value="50S ribosomal protein L23"/>
    <property type="match status" value="1"/>
</dbReference>
<dbReference type="Gene3D" id="3.30.70.330">
    <property type="match status" value="1"/>
</dbReference>
<dbReference type="HAMAP" id="MF_01369_B">
    <property type="entry name" value="Ribosomal_uL23_B"/>
    <property type="match status" value="1"/>
</dbReference>
<dbReference type="InterPro" id="IPR012677">
    <property type="entry name" value="Nucleotide-bd_a/b_plait_sf"/>
</dbReference>
<dbReference type="InterPro" id="IPR013025">
    <property type="entry name" value="Ribosomal_uL23-like"/>
</dbReference>
<dbReference type="InterPro" id="IPR012678">
    <property type="entry name" value="Ribosomal_uL23/eL15/eS24_sf"/>
</dbReference>
<dbReference type="NCBIfam" id="NF004359">
    <property type="entry name" value="PRK05738.1-3"/>
    <property type="match status" value="1"/>
</dbReference>
<dbReference type="NCBIfam" id="NF004363">
    <property type="entry name" value="PRK05738.2-4"/>
    <property type="match status" value="1"/>
</dbReference>
<dbReference type="PANTHER" id="PTHR11620">
    <property type="entry name" value="60S RIBOSOMAL PROTEIN L23A"/>
    <property type="match status" value="1"/>
</dbReference>
<dbReference type="Pfam" id="PF00276">
    <property type="entry name" value="Ribosomal_L23"/>
    <property type="match status" value="1"/>
</dbReference>
<dbReference type="SUPFAM" id="SSF54189">
    <property type="entry name" value="Ribosomal proteins S24e, L23 and L15e"/>
    <property type="match status" value="1"/>
</dbReference>
<name>RL23_BURP1</name>
<sequence>MSEIRKNDHRLMQVLLAPVISEKATLVADKNEQVVFEVAPDATKQEVKAAVELLFKVEVDSVNVLVQKGKQKRFGRSMGRRKDVKKAYVCLKPGQEINFEAEAK</sequence>
<proteinExistence type="inferred from homology"/>
<evidence type="ECO:0000255" key="1">
    <source>
        <dbReference type="HAMAP-Rule" id="MF_01369"/>
    </source>
</evidence>
<evidence type="ECO:0000305" key="2"/>